<name>GLCM2_CAEEL</name>
<keyword id="KW-0378">Hydrolase</keyword>
<keyword id="KW-0443">Lipid metabolism</keyword>
<keyword id="KW-1185">Reference proteome</keyword>
<keyword id="KW-0732">Signal</keyword>
<keyword id="KW-0746">Sphingolipid metabolism</keyword>
<comment type="function">
    <text evidence="2 4">Glucosylceramidase that catalyzes the hydrolysis of glucosylceramides into free ceramides and glucose (By similarity). C.elegans contain specific sphingoid bases, which are unique or different in structure compared to the sphingoid bases found in other animals. Two examples of these distinctive compounds are: 15-methylhexadecasphinganine and 15-methylhexadecasphing-4-enine (PubMed:30155209).</text>
</comment>
<comment type="catalytic activity">
    <reaction evidence="5">
        <text>a beta-D-glucosylceramide + H2O = an N-acyl-sphingoid base + D-glucose</text>
        <dbReference type="Rhea" id="RHEA:81447"/>
        <dbReference type="ChEBI" id="CHEBI:4167"/>
        <dbReference type="ChEBI" id="CHEBI:15377"/>
        <dbReference type="ChEBI" id="CHEBI:83264"/>
        <dbReference type="ChEBI" id="CHEBI:83273"/>
    </reaction>
    <physiologicalReaction direction="left-to-right" evidence="5">
        <dbReference type="Rhea" id="RHEA:81448"/>
    </physiologicalReaction>
</comment>
<comment type="catalytic activity">
    <reaction>
        <text>a beta-D-glucosyl-(1&lt;-&gt;1')-N-acylsphing-4-enine + H2O = an N-acylsphing-4-enine + D-glucose</text>
        <dbReference type="Rhea" id="RHEA:13269"/>
        <dbReference type="ChEBI" id="CHEBI:4167"/>
        <dbReference type="ChEBI" id="CHEBI:15377"/>
        <dbReference type="ChEBI" id="CHEBI:22801"/>
        <dbReference type="ChEBI" id="CHEBI:52639"/>
        <dbReference type="EC" id="3.2.1.45"/>
    </reaction>
    <physiologicalReaction direction="left-to-right" evidence="5">
        <dbReference type="Rhea" id="RHEA:13270"/>
    </physiologicalReaction>
</comment>
<comment type="catalytic activity">
    <reaction evidence="5">
        <text>an N-acyl-1-beta-D-glucosyl-15-methylhexadecasphing-4-enine + H2O = an N-acyl-15-methylhexadecasphing-4-enine + D-glucose</text>
        <dbReference type="Rhea" id="RHEA:34755"/>
        <dbReference type="ChEBI" id="CHEBI:4167"/>
        <dbReference type="ChEBI" id="CHEBI:15377"/>
        <dbReference type="ChEBI" id="CHEBI:70815"/>
        <dbReference type="ChEBI" id="CHEBI:70846"/>
    </reaction>
    <physiologicalReaction direction="left-to-right" evidence="5">
        <dbReference type="Rhea" id="RHEA:34756"/>
    </physiologicalReaction>
</comment>
<comment type="pathway">
    <text>Lipid metabolism; sphingolipid metabolism.</text>
</comment>
<comment type="similarity">
    <text evidence="5">Belongs to the glycosyl hydrolase 30 family.</text>
</comment>
<organism>
    <name type="scientific">Caenorhabditis elegans</name>
    <dbReference type="NCBI Taxonomy" id="6239"/>
    <lineage>
        <taxon>Eukaryota</taxon>
        <taxon>Metazoa</taxon>
        <taxon>Ecdysozoa</taxon>
        <taxon>Nematoda</taxon>
        <taxon>Chromadorea</taxon>
        <taxon>Rhabditida</taxon>
        <taxon>Rhabditina</taxon>
        <taxon>Rhabditomorpha</taxon>
        <taxon>Rhabditoidea</taxon>
        <taxon>Rhabditidae</taxon>
        <taxon>Peloderinae</taxon>
        <taxon>Caenorhabditis</taxon>
    </lineage>
</organism>
<evidence type="ECO:0000250" key="1"/>
<evidence type="ECO:0000250" key="2">
    <source>
        <dbReference type="UniProtKB" id="P17439"/>
    </source>
</evidence>
<evidence type="ECO:0000255" key="3"/>
<evidence type="ECO:0000269" key="4">
    <source>
    </source>
</evidence>
<evidence type="ECO:0000305" key="5"/>
<feature type="signal peptide" evidence="3">
    <location>
        <begin position="1"/>
        <end position="23"/>
    </location>
</feature>
<feature type="chain" id="PRO_0000421454" description="Putative glucosylceramidase 2">
    <location>
        <begin position="24"/>
        <end position="516"/>
    </location>
</feature>
<feature type="active site" description="Proton donor" evidence="1">
    <location>
        <position position="254"/>
    </location>
</feature>
<feature type="active site" description="Nucleophile" evidence="1">
    <location>
        <position position="358"/>
    </location>
</feature>
<sequence>MSIAWSCFVLGLFALASLQVALANDCAQKTFKTGIVCVCNITYCDEIPDINLLSGQAATFTTSKSGARLHRDVVYATNSDPLTSMHFTIDSSKTYQTIQGFGSTFSDASGANLKSLPDQMADTILRQYFSDSGLNLQFGRVPIASNDFSSRVYTYDDNLEDYNMAHFSLQREDYQWKIPYMQMAQKYNHDLKFFAVPWSAPGWLKTTNSTKGYGILLGTNQDTYHKSYVTYILHFLEEYQKNGILFWGLSTQNEPTSGSDKKTKMQSMGFTAEFQRDFIKLDIGPALKSSNAGKNVKILILDDNRGNLPKWADTVLNDKDAASYVSGIAVHSYQDDESDKHLTQTHNNHPDVFIFGTEASEGSKSKDVDYGSFDRAEDYVSDILDDFNNWVTGWTERNLVLDAQGGPSWVSGFADAPVIAFPALAQFYKQPMFYAIAHFSHFLKPGAVRIDHSLNMPNPEIERSAFLNPDGSKVVVLHNKNPLAPYSLSIKDTMKSTDHYQVHLSPKTIVTLYIQN</sequence>
<reference key="1">
    <citation type="journal article" date="1998" name="Science">
        <title>Genome sequence of the nematode C. elegans: a platform for investigating biology.</title>
        <authorList>
            <consortium name="The C. elegans sequencing consortium"/>
        </authorList>
    </citation>
    <scope>NUCLEOTIDE SEQUENCE [LARGE SCALE GENOMIC DNA]</scope>
    <source>
        <strain>Bristol N2</strain>
    </source>
</reference>
<reference key="2">
    <citation type="journal article" date="2017" name="Chem. Sci.">
        <title>Structure and conserved function of iso-branched sphingoid bases from the nematode Caenorhabditis elegans.</title>
        <authorList>
            <person name="Hannich J.T."/>
            <person name="Mellal D."/>
            <person name="Feng S."/>
            <person name="Zumbuehl A."/>
            <person name="Riezman H."/>
        </authorList>
    </citation>
    <scope>FUNCTION</scope>
</reference>
<proteinExistence type="inferred from homology"/>
<protein>
    <recommendedName>
        <fullName>Putative glucosylceramidase 2</fullName>
        <ecNumber>3.2.1.45</ecNumber>
    </recommendedName>
</protein>
<gene>
    <name type="primary">gba-2</name>
    <name type="ORF">C33C12.8</name>
</gene>
<dbReference type="EC" id="3.2.1.45"/>
<dbReference type="EMBL" id="FO080754">
    <property type="protein sequence ID" value="CCD66456.1"/>
    <property type="molecule type" value="Genomic_DNA"/>
</dbReference>
<dbReference type="RefSeq" id="NP_494208.2">
    <property type="nucleotide sequence ID" value="NM_061807.7"/>
</dbReference>
<dbReference type="SMR" id="O16581"/>
<dbReference type="BioGRID" id="47987">
    <property type="interactions" value="3"/>
</dbReference>
<dbReference type="DIP" id="DIP-25825N"/>
<dbReference type="FunCoup" id="O16581">
    <property type="interactions" value="142"/>
</dbReference>
<dbReference type="STRING" id="6239.C33C12.8.1"/>
<dbReference type="CAZy" id="GH30">
    <property type="family name" value="Glycoside Hydrolase Family 30"/>
</dbReference>
<dbReference type="PaxDb" id="6239-C33C12.8"/>
<dbReference type="PeptideAtlas" id="O16581"/>
<dbReference type="EnsemblMetazoa" id="C33C12.8.1">
    <property type="protein sequence ID" value="C33C12.8.1"/>
    <property type="gene ID" value="WBGene00016340"/>
</dbReference>
<dbReference type="GeneID" id="183155"/>
<dbReference type="KEGG" id="cel:CELE_C33C12.8"/>
<dbReference type="UCSC" id="C33C12.8">
    <property type="organism name" value="c. elegans"/>
</dbReference>
<dbReference type="AGR" id="WB:WBGene00016340"/>
<dbReference type="CTD" id="183155"/>
<dbReference type="WormBase" id="C33C12.8">
    <property type="protein sequence ID" value="CE41877"/>
    <property type="gene ID" value="WBGene00016340"/>
    <property type="gene designation" value="gba-2"/>
</dbReference>
<dbReference type="eggNOG" id="KOG2566">
    <property type="taxonomic scope" value="Eukaryota"/>
</dbReference>
<dbReference type="GeneTree" id="ENSGT00390000009464"/>
<dbReference type="HOGENOM" id="CLU_014379_1_2_1"/>
<dbReference type="InParanoid" id="O16581"/>
<dbReference type="OMA" id="IPYMQMA"/>
<dbReference type="OrthoDB" id="2160638at2759"/>
<dbReference type="PhylomeDB" id="O16581"/>
<dbReference type="UniPathway" id="UPA00222"/>
<dbReference type="PRO" id="PR:O16581"/>
<dbReference type="Proteomes" id="UP000001940">
    <property type="component" value="Chromosome II"/>
</dbReference>
<dbReference type="Bgee" id="WBGene00016340">
    <property type="expression patterns" value="Expressed in adult organism and 1 other cell type or tissue"/>
</dbReference>
<dbReference type="GO" id="GO:0016020">
    <property type="term" value="C:membrane"/>
    <property type="evidence" value="ECO:0007669"/>
    <property type="project" value="GOC"/>
</dbReference>
<dbReference type="GO" id="GO:0004348">
    <property type="term" value="F:glucosylceramidase activity"/>
    <property type="evidence" value="ECO:0000318"/>
    <property type="project" value="GO_Central"/>
</dbReference>
<dbReference type="GO" id="GO:0006680">
    <property type="term" value="P:glucosylceramide catabolic process"/>
    <property type="evidence" value="ECO:0000318"/>
    <property type="project" value="GO_Central"/>
</dbReference>
<dbReference type="FunFam" id="3.20.20.80:FF:000030">
    <property type="entry name" value="Lysosomal acid glucosylceramidase"/>
    <property type="match status" value="1"/>
</dbReference>
<dbReference type="Gene3D" id="3.20.20.80">
    <property type="entry name" value="Glycosidases"/>
    <property type="match status" value="1"/>
</dbReference>
<dbReference type="InterPro" id="IPR033452">
    <property type="entry name" value="GH30_C"/>
</dbReference>
<dbReference type="InterPro" id="IPR001139">
    <property type="entry name" value="Glyco_hydro_30"/>
</dbReference>
<dbReference type="InterPro" id="IPR033453">
    <property type="entry name" value="Glyco_hydro_30_TIM-barrel"/>
</dbReference>
<dbReference type="InterPro" id="IPR017853">
    <property type="entry name" value="Glycoside_hydrolase_SF"/>
</dbReference>
<dbReference type="PANTHER" id="PTHR11069">
    <property type="entry name" value="GLUCOSYLCERAMIDASE"/>
    <property type="match status" value="1"/>
</dbReference>
<dbReference type="PANTHER" id="PTHR11069:SF39">
    <property type="entry name" value="GLUCOSYLCERAMIDASE 2-RELATED"/>
    <property type="match status" value="1"/>
</dbReference>
<dbReference type="Pfam" id="PF02055">
    <property type="entry name" value="Glyco_hydro_30"/>
    <property type="match status" value="1"/>
</dbReference>
<dbReference type="Pfam" id="PF17189">
    <property type="entry name" value="Glyco_hydro_30C"/>
    <property type="match status" value="1"/>
</dbReference>
<dbReference type="PRINTS" id="PR00843">
    <property type="entry name" value="GLHYDRLASE30"/>
</dbReference>
<dbReference type="SUPFAM" id="SSF51445">
    <property type="entry name" value="(Trans)glycosidases"/>
    <property type="match status" value="1"/>
</dbReference>
<dbReference type="SUPFAM" id="SSF51011">
    <property type="entry name" value="Glycosyl hydrolase domain"/>
    <property type="match status" value="1"/>
</dbReference>
<accession>O16581</accession>